<evidence type="ECO:0000255" key="1">
    <source>
        <dbReference type="HAMAP-Rule" id="MF_01547"/>
    </source>
</evidence>
<evidence type="ECO:0000256" key="2">
    <source>
        <dbReference type="SAM" id="MobiDB-lite"/>
    </source>
</evidence>
<keyword id="KW-0963">Cytoplasm</keyword>
<keyword id="KW-0489">Methyltransferase</keyword>
<keyword id="KW-1185">Reference proteome</keyword>
<keyword id="KW-0698">rRNA processing</keyword>
<keyword id="KW-0949">S-adenosyl-L-methionine</keyword>
<keyword id="KW-0808">Transferase</keyword>
<name>RLME_BURPS</name>
<feature type="chain" id="PRO_0000155485" description="Ribosomal RNA large subunit methyltransferase E">
    <location>
        <begin position="1"/>
        <end position="220"/>
    </location>
</feature>
<feature type="region of interest" description="Disordered" evidence="2">
    <location>
        <begin position="195"/>
        <end position="220"/>
    </location>
</feature>
<feature type="active site" description="Proton acceptor" evidence="1">
    <location>
        <position position="173"/>
    </location>
</feature>
<feature type="binding site" evidence="1">
    <location>
        <position position="60"/>
    </location>
    <ligand>
        <name>S-adenosyl-L-methionine</name>
        <dbReference type="ChEBI" id="CHEBI:59789"/>
    </ligand>
</feature>
<feature type="binding site" evidence="1">
    <location>
        <position position="62"/>
    </location>
    <ligand>
        <name>S-adenosyl-L-methionine</name>
        <dbReference type="ChEBI" id="CHEBI:59789"/>
    </ligand>
</feature>
<feature type="binding site" evidence="1">
    <location>
        <position position="92"/>
    </location>
    <ligand>
        <name>S-adenosyl-L-methionine</name>
        <dbReference type="ChEBI" id="CHEBI:59789"/>
    </ligand>
</feature>
<feature type="binding site" evidence="1">
    <location>
        <position position="108"/>
    </location>
    <ligand>
        <name>S-adenosyl-L-methionine</name>
        <dbReference type="ChEBI" id="CHEBI:59789"/>
    </ligand>
</feature>
<feature type="binding site" evidence="1">
    <location>
        <position position="133"/>
    </location>
    <ligand>
        <name>S-adenosyl-L-methionine</name>
        <dbReference type="ChEBI" id="CHEBI:59789"/>
    </ligand>
</feature>
<organism>
    <name type="scientific">Burkholderia pseudomallei (strain K96243)</name>
    <dbReference type="NCBI Taxonomy" id="272560"/>
    <lineage>
        <taxon>Bacteria</taxon>
        <taxon>Pseudomonadati</taxon>
        <taxon>Pseudomonadota</taxon>
        <taxon>Betaproteobacteria</taxon>
        <taxon>Burkholderiales</taxon>
        <taxon>Burkholderiaceae</taxon>
        <taxon>Burkholderia</taxon>
        <taxon>pseudomallei group</taxon>
    </lineage>
</organism>
<sequence>MAKNRFNQSWLHDHINDPYVKMAQREGYRARAAYKLKEIDEQDKLIRPGQVIVDLGAAPGSWSQYARNKLAQGKRRDAVREGGIDGTIIALDMLPMEPVADVHFIQGDFREESVLHQLEEVLAGRAVDLVISDMAPNLSGVAVADAARIEHVCDLALEFAQNHLKPDGALLVKCFHGSGYSQIVEKFKHQFKTVAPRKPKASRDKSSETFILGRHLKQPR</sequence>
<gene>
    <name evidence="1" type="primary">rlmE</name>
    <name evidence="1" type="synonym">ftsJ</name>
    <name evidence="1" type="synonym">rrmJ</name>
    <name type="ordered locus">BPSL1355</name>
</gene>
<comment type="function">
    <text evidence="1">Specifically methylates the uridine in position 2552 of 23S rRNA at the 2'-O position of the ribose in the fully assembled 50S ribosomal subunit.</text>
</comment>
<comment type="catalytic activity">
    <reaction evidence="1">
        <text>uridine(2552) in 23S rRNA + S-adenosyl-L-methionine = 2'-O-methyluridine(2552) in 23S rRNA + S-adenosyl-L-homocysteine + H(+)</text>
        <dbReference type="Rhea" id="RHEA:42720"/>
        <dbReference type="Rhea" id="RHEA-COMP:10202"/>
        <dbReference type="Rhea" id="RHEA-COMP:10203"/>
        <dbReference type="ChEBI" id="CHEBI:15378"/>
        <dbReference type="ChEBI" id="CHEBI:57856"/>
        <dbReference type="ChEBI" id="CHEBI:59789"/>
        <dbReference type="ChEBI" id="CHEBI:65315"/>
        <dbReference type="ChEBI" id="CHEBI:74478"/>
        <dbReference type="EC" id="2.1.1.166"/>
    </reaction>
</comment>
<comment type="subcellular location">
    <subcellularLocation>
        <location evidence="1">Cytoplasm</location>
    </subcellularLocation>
</comment>
<comment type="similarity">
    <text evidence="1">Belongs to the class I-like SAM-binding methyltransferase superfamily. RNA methyltransferase RlmE family.</text>
</comment>
<proteinExistence type="inferred from homology"/>
<reference key="1">
    <citation type="journal article" date="2004" name="Proc. Natl. Acad. Sci. U.S.A.">
        <title>Genomic plasticity of the causative agent of melioidosis, Burkholderia pseudomallei.</title>
        <authorList>
            <person name="Holden M.T.G."/>
            <person name="Titball R.W."/>
            <person name="Peacock S.J."/>
            <person name="Cerdeno-Tarraga A.-M."/>
            <person name="Atkins T."/>
            <person name="Crossman L.C."/>
            <person name="Pitt T."/>
            <person name="Churcher C."/>
            <person name="Mungall K.L."/>
            <person name="Bentley S.D."/>
            <person name="Sebaihia M."/>
            <person name="Thomson N.R."/>
            <person name="Bason N."/>
            <person name="Beacham I.R."/>
            <person name="Brooks K."/>
            <person name="Brown K.A."/>
            <person name="Brown N.F."/>
            <person name="Challis G.L."/>
            <person name="Cherevach I."/>
            <person name="Chillingworth T."/>
            <person name="Cronin A."/>
            <person name="Crossett B."/>
            <person name="Davis P."/>
            <person name="DeShazer D."/>
            <person name="Feltwell T."/>
            <person name="Fraser A."/>
            <person name="Hance Z."/>
            <person name="Hauser H."/>
            <person name="Holroyd S."/>
            <person name="Jagels K."/>
            <person name="Keith K.E."/>
            <person name="Maddison M."/>
            <person name="Moule S."/>
            <person name="Price C."/>
            <person name="Quail M.A."/>
            <person name="Rabbinowitsch E."/>
            <person name="Rutherford K."/>
            <person name="Sanders M."/>
            <person name="Simmonds M."/>
            <person name="Songsivilai S."/>
            <person name="Stevens K."/>
            <person name="Tumapa S."/>
            <person name="Vesaratchavest M."/>
            <person name="Whitehead S."/>
            <person name="Yeats C."/>
            <person name="Barrell B.G."/>
            <person name="Oyston P.C.F."/>
            <person name="Parkhill J."/>
        </authorList>
    </citation>
    <scope>NUCLEOTIDE SEQUENCE [LARGE SCALE GENOMIC DNA]</scope>
    <source>
        <strain>K96243</strain>
    </source>
</reference>
<accession>Q63V86</accession>
<protein>
    <recommendedName>
        <fullName evidence="1">Ribosomal RNA large subunit methyltransferase E</fullName>
        <ecNumber evidence="1">2.1.1.166</ecNumber>
    </recommendedName>
    <alternativeName>
        <fullName evidence="1">23S rRNA Um2552 methyltransferase</fullName>
    </alternativeName>
    <alternativeName>
        <fullName evidence="1">rRNA (uridine-2'-O-)-methyltransferase</fullName>
    </alternativeName>
</protein>
<dbReference type="EC" id="2.1.1.166" evidence="1"/>
<dbReference type="EMBL" id="BX571965">
    <property type="protein sequence ID" value="CAH35353.1"/>
    <property type="molecule type" value="Genomic_DNA"/>
</dbReference>
<dbReference type="RefSeq" id="WP_004193119.1">
    <property type="nucleotide sequence ID" value="NZ_CP009538.1"/>
</dbReference>
<dbReference type="RefSeq" id="YP_107980.1">
    <property type="nucleotide sequence ID" value="NC_006350.1"/>
</dbReference>
<dbReference type="SMR" id="Q63V86"/>
<dbReference type="STRING" id="272560.BPSL1355"/>
<dbReference type="KEGG" id="bps:BPSL1355"/>
<dbReference type="PATRIC" id="fig|272560.51.peg.125"/>
<dbReference type="eggNOG" id="COG0293">
    <property type="taxonomic scope" value="Bacteria"/>
</dbReference>
<dbReference type="Proteomes" id="UP000000605">
    <property type="component" value="Chromosome 1"/>
</dbReference>
<dbReference type="GO" id="GO:0005737">
    <property type="term" value="C:cytoplasm"/>
    <property type="evidence" value="ECO:0007669"/>
    <property type="project" value="UniProtKB-SubCell"/>
</dbReference>
<dbReference type="GO" id="GO:0008650">
    <property type="term" value="F:rRNA (uridine-2'-O-)-methyltransferase activity"/>
    <property type="evidence" value="ECO:0007669"/>
    <property type="project" value="UniProtKB-UniRule"/>
</dbReference>
<dbReference type="FunFam" id="3.40.50.150:FF:000005">
    <property type="entry name" value="Ribosomal RNA large subunit methyltransferase E"/>
    <property type="match status" value="1"/>
</dbReference>
<dbReference type="Gene3D" id="3.40.50.150">
    <property type="entry name" value="Vaccinia Virus protein VP39"/>
    <property type="match status" value="1"/>
</dbReference>
<dbReference type="HAMAP" id="MF_01547">
    <property type="entry name" value="RNA_methyltr_E"/>
    <property type="match status" value="1"/>
</dbReference>
<dbReference type="InterPro" id="IPR050082">
    <property type="entry name" value="RNA_methyltr_RlmE"/>
</dbReference>
<dbReference type="InterPro" id="IPR002877">
    <property type="entry name" value="RNA_MeTrfase_FtsJ_dom"/>
</dbReference>
<dbReference type="InterPro" id="IPR015507">
    <property type="entry name" value="rRNA-MeTfrase_E"/>
</dbReference>
<dbReference type="InterPro" id="IPR029063">
    <property type="entry name" value="SAM-dependent_MTases_sf"/>
</dbReference>
<dbReference type="PANTHER" id="PTHR10920">
    <property type="entry name" value="RIBOSOMAL RNA METHYLTRANSFERASE"/>
    <property type="match status" value="1"/>
</dbReference>
<dbReference type="PANTHER" id="PTHR10920:SF18">
    <property type="entry name" value="RRNA METHYLTRANSFERASE 2, MITOCHONDRIAL"/>
    <property type="match status" value="1"/>
</dbReference>
<dbReference type="Pfam" id="PF01728">
    <property type="entry name" value="FtsJ"/>
    <property type="match status" value="1"/>
</dbReference>
<dbReference type="PIRSF" id="PIRSF005461">
    <property type="entry name" value="23S_rRNA_mtase"/>
    <property type="match status" value="1"/>
</dbReference>
<dbReference type="SUPFAM" id="SSF53335">
    <property type="entry name" value="S-adenosyl-L-methionine-dependent methyltransferases"/>
    <property type="match status" value="1"/>
</dbReference>